<dbReference type="EMBL" id="AC003674">
    <property type="protein sequence ID" value="AAB97125.1"/>
    <property type="molecule type" value="Genomic_DNA"/>
</dbReference>
<dbReference type="EMBL" id="CP002685">
    <property type="protein sequence ID" value="AEC09708.1"/>
    <property type="molecule type" value="Genomic_DNA"/>
</dbReference>
<dbReference type="EMBL" id="AF410277">
    <property type="protein sequence ID" value="AAK95263.1"/>
    <property type="molecule type" value="mRNA"/>
</dbReference>
<dbReference type="EMBL" id="AY062683">
    <property type="protein sequence ID" value="AAL32761.1"/>
    <property type="molecule type" value="mRNA"/>
</dbReference>
<dbReference type="EMBL" id="AY093338">
    <property type="protein sequence ID" value="AAM13337.1"/>
    <property type="molecule type" value="mRNA"/>
</dbReference>
<dbReference type="EMBL" id="AY085719">
    <property type="protein sequence ID" value="AAM62937.1"/>
    <property type="molecule type" value="mRNA"/>
</dbReference>
<dbReference type="PIR" id="D84820">
    <property type="entry name" value="D84820"/>
</dbReference>
<dbReference type="RefSeq" id="NP_181500.1">
    <property type="nucleotide sequence ID" value="NM_129526.3"/>
</dbReference>
<dbReference type="SMR" id="O48818"/>
<dbReference type="FunCoup" id="O48818">
    <property type="interactions" value="57"/>
</dbReference>
<dbReference type="STRING" id="3702.O48818"/>
<dbReference type="PaxDb" id="3702-AT2G39700.1"/>
<dbReference type="ProteomicsDB" id="222239"/>
<dbReference type="EnsemblPlants" id="AT2G39700.1">
    <property type="protein sequence ID" value="AT2G39700.1"/>
    <property type="gene ID" value="AT2G39700"/>
</dbReference>
<dbReference type="GeneID" id="818553"/>
<dbReference type="Gramene" id="AT2G39700.1">
    <property type="protein sequence ID" value="AT2G39700.1"/>
    <property type="gene ID" value="AT2G39700"/>
</dbReference>
<dbReference type="KEGG" id="ath:AT2G39700"/>
<dbReference type="Araport" id="AT2G39700"/>
<dbReference type="TAIR" id="AT2G39700">
    <property type="gene designation" value="EXPA4"/>
</dbReference>
<dbReference type="eggNOG" id="ENOG502QR06">
    <property type="taxonomic scope" value="Eukaryota"/>
</dbReference>
<dbReference type="HOGENOM" id="CLU_027462_0_1_1"/>
<dbReference type="InParanoid" id="O48818"/>
<dbReference type="OMA" id="IRIMMAR"/>
<dbReference type="OrthoDB" id="5823761at2759"/>
<dbReference type="PhylomeDB" id="O48818"/>
<dbReference type="CD-CODE" id="4299E36E">
    <property type="entry name" value="Nucleolus"/>
</dbReference>
<dbReference type="PRO" id="PR:O48818"/>
<dbReference type="Proteomes" id="UP000006548">
    <property type="component" value="Chromosome 2"/>
</dbReference>
<dbReference type="ExpressionAtlas" id="O48818">
    <property type="expression patterns" value="baseline and differential"/>
</dbReference>
<dbReference type="GO" id="GO:0005576">
    <property type="term" value="C:extracellular region"/>
    <property type="evidence" value="ECO:0007669"/>
    <property type="project" value="UniProtKB-KW"/>
</dbReference>
<dbReference type="GO" id="GO:0016020">
    <property type="term" value="C:membrane"/>
    <property type="evidence" value="ECO:0007669"/>
    <property type="project" value="UniProtKB-SubCell"/>
</dbReference>
<dbReference type="GO" id="GO:0009505">
    <property type="term" value="C:plant-type cell wall"/>
    <property type="evidence" value="ECO:0007005"/>
    <property type="project" value="TAIR"/>
</dbReference>
<dbReference type="GO" id="GO:0009506">
    <property type="term" value="C:plasmodesma"/>
    <property type="evidence" value="ECO:0007005"/>
    <property type="project" value="TAIR"/>
</dbReference>
<dbReference type="GO" id="GO:0009828">
    <property type="term" value="P:plant-type cell wall loosening"/>
    <property type="evidence" value="ECO:0000250"/>
    <property type="project" value="UniProtKB"/>
</dbReference>
<dbReference type="GO" id="GO:0006949">
    <property type="term" value="P:syncytium formation"/>
    <property type="evidence" value="ECO:0000270"/>
    <property type="project" value="TAIR"/>
</dbReference>
<dbReference type="CDD" id="cd22274">
    <property type="entry name" value="DPBB_EXPA_N"/>
    <property type="match status" value="1"/>
</dbReference>
<dbReference type="FunFam" id="2.40.40.10:FF:000001">
    <property type="entry name" value="Expansin"/>
    <property type="match status" value="1"/>
</dbReference>
<dbReference type="FunFam" id="2.60.40.760:FF:000001">
    <property type="entry name" value="Expansin"/>
    <property type="match status" value="1"/>
</dbReference>
<dbReference type="Gene3D" id="2.60.40.760">
    <property type="entry name" value="Expansin, cellulose-binding-like domain"/>
    <property type="match status" value="1"/>
</dbReference>
<dbReference type="Gene3D" id="2.40.40.10">
    <property type="entry name" value="RlpA-like domain"/>
    <property type="match status" value="1"/>
</dbReference>
<dbReference type="InterPro" id="IPR007118">
    <property type="entry name" value="Expan_Lol_pI"/>
</dbReference>
<dbReference type="InterPro" id="IPR002963">
    <property type="entry name" value="Expansin"/>
</dbReference>
<dbReference type="InterPro" id="IPR007112">
    <property type="entry name" value="Expansin/allergen_DPBB_dom"/>
</dbReference>
<dbReference type="InterPro" id="IPR007117">
    <property type="entry name" value="Expansin_CBD"/>
</dbReference>
<dbReference type="InterPro" id="IPR036749">
    <property type="entry name" value="Expansin_CBD_sf"/>
</dbReference>
<dbReference type="InterPro" id="IPR009009">
    <property type="entry name" value="RlpA-like_DPBB"/>
</dbReference>
<dbReference type="InterPro" id="IPR036908">
    <property type="entry name" value="RlpA-like_sf"/>
</dbReference>
<dbReference type="PANTHER" id="PTHR31867">
    <property type="entry name" value="EXPANSIN-A15"/>
    <property type="match status" value="1"/>
</dbReference>
<dbReference type="Pfam" id="PF03330">
    <property type="entry name" value="DPBB_1"/>
    <property type="match status" value="1"/>
</dbReference>
<dbReference type="Pfam" id="PF01357">
    <property type="entry name" value="Expansin_C"/>
    <property type="match status" value="1"/>
</dbReference>
<dbReference type="PRINTS" id="PR01226">
    <property type="entry name" value="EXPANSIN"/>
</dbReference>
<dbReference type="PRINTS" id="PR01225">
    <property type="entry name" value="EXPANSNFAMLY"/>
</dbReference>
<dbReference type="SMART" id="SM00837">
    <property type="entry name" value="DPBB_1"/>
    <property type="match status" value="1"/>
</dbReference>
<dbReference type="SUPFAM" id="SSF50685">
    <property type="entry name" value="Barwin-like endoglucanases"/>
    <property type="match status" value="1"/>
</dbReference>
<dbReference type="SUPFAM" id="SSF49590">
    <property type="entry name" value="PHL pollen allergen"/>
    <property type="match status" value="1"/>
</dbReference>
<dbReference type="PROSITE" id="PS50843">
    <property type="entry name" value="EXPANSIN_CBD"/>
    <property type="match status" value="1"/>
</dbReference>
<dbReference type="PROSITE" id="PS50842">
    <property type="entry name" value="EXPANSIN_EG45"/>
    <property type="match status" value="1"/>
</dbReference>
<reference key="1">
    <citation type="journal article" date="1999" name="Nature">
        <title>Sequence and analysis of chromosome 2 of the plant Arabidopsis thaliana.</title>
        <authorList>
            <person name="Lin X."/>
            <person name="Kaul S."/>
            <person name="Rounsley S.D."/>
            <person name="Shea T.P."/>
            <person name="Benito M.-I."/>
            <person name="Town C.D."/>
            <person name="Fujii C.Y."/>
            <person name="Mason T.M."/>
            <person name="Bowman C.L."/>
            <person name="Barnstead M.E."/>
            <person name="Feldblyum T.V."/>
            <person name="Buell C.R."/>
            <person name="Ketchum K.A."/>
            <person name="Lee J.J."/>
            <person name="Ronning C.M."/>
            <person name="Koo H.L."/>
            <person name="Moffat K.S."/>
            <person name="Cronin L.A."/>
            <person name="Shen M."/>
            <person name="Pai G."/>
            <person name="Van Aken S."/>
            <person name="Umayam L."/>
            <person name="Tallon L.J."/>
            <person name="Gill J.E."/>
            <person name="Adams M.D."/>
            <person name="Carrera A.J."/>
            <person name="Creasy T.H."/>
            <person name="Goodman H.M."/>
            <person name="Somerville C.R."/>
            <person name="Copenhaver G.P."/>
            <person name="Preuss D."/>
            <person name="Nierman W.C."/>
            <person name="White O."/>
            <person name="Eisen J.A."/>
            <person name="Salzberg S.L."/>
            <person name="Fraser C.M."/>
            <person name="Venter J.C."/>
        </authorList>
    </citation>
    <scope>NUCLEOTIDE SEQUENCE [LARGE SCALE GENOMIC DNA]</scope>
    <source>
        <strain>cv. Columbia</strain>
    </source>
</reference>
<reference key="2">
    <citation type="journal article" date="2017" name="Plant J.">
        <title>Araport11: a complete reannotation of the Arabidopsis thaliana reference genome.</title>
        <authorList>
            <person name="Cheng C.Y."/>
            <person name="Krishnakumar V."/>
            <person name="Chan A.P."/>
            <person name="Thibaud-Nissen F."/>
            <person name="Schobel S."/>
            <person name="Town C.D."/>
        </authorList>
    </citation>
    <scope>GENOME REANNOTATION</scope>
    <source>
        <strain>cv. Columbia</strain>
    </source>
</reference>
<reference key="3">
    <citation type="journal article" date="2003" name="Science">
        <title>Empirical analysis of transcriptional activity in the Arabidopsis genome.</title>
        <authorList>
            <person name="Yamada K."/>
            <person name="Lim J."/>
            <person name="Dale J.M."/>
            <person name="Chen H."/>
            <person name="Shinn P."/>
            <person name="Palm C.J."/>
            <person name="Southwick A.M."/>
            <person name="Wu H.C."/>
            <person name="Kim C.J."/>
            <person name="Nguyen M."/>
            <person name="Pham P.K."/>
            <person name="Cheuk R.F."/>
            <person name="Karlin-Newmann G."/>
            <person name="Liu S.X."/>
            <person name="Lam B."/>
            <person name="Sakano H."/>
            <person name="Wu T."/>
            <person name="Yu G."/>
            <person name="Miranda M."/>
            <person name="Quach H.L."/>
            <person name="Tripp M."/>
            <person name="Chang C.H."/>
            <person name="Lee J.M."/>
            <person name="Toriumi M.J."/>
            <person name="Chan M.M."/>
            <person name="Tang C.C."/>
            <person name="Onodera C.S."/>
            <person name="Deng J.M."/>
            <person name="Akiyama K."/>
            <person name="Ansari Y."/>
            <person name="Arakawa T."/>
            <person name="Banh J."/>
            <person name="Banno F."/>
            <person name="Bowser L."/>
            <person name="Brooks S.Y."/>
            <person name="Carninci P."/>
            <person name="Chao Q."/>
            <person name="Choy N."/>
            <person name="Enju A."/>
            <person name="Goldsmith A.D."/>
            <person name="Gurjal M."/>
            <person name="Hansen N.F."/>
            <person name="Hayashizaki Y."/>
            <person name="Johnson-Hopson C."/>
            <person name="Hsuan V.W."/>
            <person name="Iida K."/>
            <person name="Karnes M."/>
            <person name="Khan S."/>
            <person name="Koesema E."/>
            <person name="Ishida J."/>
            <person name="Jiang P.X."/>
            <person name="Jones T."/>
            <person name="Kawai J."/>
            <person name="Kamiya A."/>
            <person name="Meyers C."/>
            <person name="Nakajima M."/>
            <person name="Narusaka M."/>
            <person name="Seki M."/>
            <person name="Sakurai T."/>
            <person name="Satou M."/>
            <person name="Tamse R."/>
            <person name="Vaysberg M."/>
            <person name="Wallender E.K."/>
            <person name="Wong C."/>
            <person name="Yamamura Y."/>
            <person name="Yuan S."/>
            <person name="Shinozaki K."/>
            <person name="Davis R.W."/>
            <person name="Theologis A."/>
            <person name="Ecker J.R."/>
        </authorList>
    </citation>
    <scope>NUCLEOTIDE SEQUENCE [LARGE SCALE MRNA]</scope>
    <source>
        <strain>cv. Columbia</strain>
    </source>
</reference>
<reference key="4">
    <citation type="submission" date="2002-03" db="EMBL/GenBank/DDBJ databases">
        <title>Full-length cDNA from Arabidopsis thaliana.</title>
        <authorList>
            <person name="Brover V.V."/>
            <person name="Troukhan M.E."/>
            <person name="Alexandrov N.A."/>
            <person name="Lu Y.-P."/>
            <person name="Flavell R.B."/>
            <person name="Feldmann K.A."/>
        </authorList>
    </citation>
    <scope>NUCLEOTIDE SEQUENCE [LARGE SCALE MRNA]</scope>
</reference>
<reference key="5">
    <citation type="journal article" date="1997" name="J. Biol. Chem.">
        <title>Differential extraction and protein sequencing reveals major differences in patterns of primary cell wall proteins from plants.</title>
        <authorList>
            <person name="Robertson D."/>
            <person name="Mitchell G.P."/>
            <person name="Gilroy J.S."/>
            <person name="Gerrish C."/>
            <person name="Bolwell G.P."/>
            <person name="Slabas A.R."/>
        </authorList>
    </citation>
    <scope>PROTEIN SEQUENCE OF 21-40</scope>
    <scope>SUBCELLULAR LOCATION</scope>
    <source>
        <strain>cv. Landsberg erecta</strain>
    </source>
</reference>
<reference key="6">
    <citation type="book" date="1999" name="Proceedings of Plant Biology '99: The annual meeting of the American Society of Plant Physiologists">
        <title>Expression patterns for selective expansin genes in Arabidopsis.</title>
        <authorList>
            <person name="Durachko D.M."/>
            <person name="Cosgrove D.J."/>
        </authorList>
    </citation>
    <scope>TISSUE SPECIFICITY</scope>
</reference>
<reference key="7">
    <citation type="journal article" date="2004" name="Plant Mol. Biol.">
        <title>Nomenclature for members of the expansin superfamily of genes and proteins.</title>
        <authorList>
            <person name="Kende H."/>
            <person name="Bradford K.J."/>
            <person name="Brummell D.A."/>
            <person name="Cho H.-T."/>
            <person name="Cosgrove D.J."/>
            <person name="Fleming A.J."/>
            <person name="Gehring C."/>
            <person name="Lee Y."/>
            <person name="McQueen-Mason S.J."/>
            <person name="Rose J.K.C."/>
            <person name="Voesenek L.A.C."/>
        </authorList>
    </citation>
    <scope>NOMENCLATURE</scope>
</reference>
<organism>
    <name type="scientific">Arabidopsis thaliana</name>
    <name type="common">Mouse-ear cress</name>
    <dbReference type="NCBI Taxonomy" id="3702"/>
    <lineage>
        <taxon>Eukaryota</taxon>
        <taxon>Viridiplantae</taxon>
        <taxon>Streptophyta</taxon>
        <taxon>Embryophyta</taxon>
        <taxon>Tracheophyta</taxon>
        <taxon>Spermatophyta</taxon>
        <taxon>Magnoliopsida</taxon>
        <taxon>eudicotyledons</taxon>
        <taxon>Gunneridae</taxon>
        <taxon>Pentapetalae</taxon>
        <taxon>rosids</taxon>
        <taxon>malvids</taxon>
        <taxon>Brassicales</taxon>
        <taxon>Brassicaceae</taxon>
        <taxon>Camelineae</taxon>
        <taxon>Arabidopsis</taxon>
    </lineage>
</organism>
<comment type="function">
    <text evidence="1">Causes loosening and extension of plant cell walls by disrupting non-covalent bonding between cellulose microfibrils and matrix glucans. No enzymatic activity has been found (By similarity).</text>
</comment>
<comment type="subcellular location">
    <subcellularLocation>
        <location evidence="4">Secreted</location>
        <location evidence="4">Cell wall</location>
    </subcellularLocation>
    <subcellularLocation>
        <location evidence="4">Membrane</location>
        <topology evidence="4">Peripheral membrane protein</topology>
    </subcellularLocation>
</comment>
<comment type="tissue specificity">
    <text evidence="5">Expressed in the vascular bundles throughout the plant.</text>
</comment>
<comment type="similarity">
    <text evidence="6">Belongs to the expansin family. Expansin A subfamily.</text>
</comment>
<comment type="online information" name="EXPANSIN homepage">
    <link uri="https://www.dept.psu.edu/biology/groups/expansins/index.htm"/>
</comment>
<gene>
    <name type="primary">EXPA4</name>
    <name type="synonym">EXP4</name>
    <name type="ordered locus">At2g39700</name>
    <name type="ORF">F17A14.7</name>
</gene>
<feature type="signal peptide" evidence="4">
    <location>
        <begin position="1"/>
        <end position="20"/>
    </location>
</feature>
<feature type="chain" id="PRO_0000008685" description="Expansin-A4">
    <location>
        <begin position="21"/>
        <end position="257"/>
    </location>
</feature>
<feature type="domain" description="Expansin-like EG45" evidence="3">
    <location>
        <begin position="49"/>
        <end position="163"/>
    </location>
</feature>
<feature type="domain" description="Expansin-like CBD" evidence="2">
    <location>
        <begin position="173"/>
        <end position="252"/>
    </location>
</feature>
<feature type="disulfide bond" evidence="3">
    <location>
        <begin position="52"/>
        <end position="80"/>
    </location>
</feature>
<feature type="disulfide bond" evidence="3">
    <location>
        <begin position="83"/>
        <end position="158"/>
    </location>
</feature>
<feature type="disulfide bond" evidence="3">
    <location>
        <begin position="88"/>
        <end position="95"/>
    </location>
</feature>
<feature type="sequence conflict" description="In Ref. 4; AAM62937." evidence="6" ref="4">
    <original>R</original>
    <variation>S</variation>
    <location>
        <position position="155"/>
    </location>
</feature>
<sequence>MAIKLAILFTTFVLFSLADARIPGIYSGGAWQNAHATFYGGSDASGTMGGACGYGNLYSQGYGTNTAALSTALFNNGMSCGACFELKCANDPQWCHSGSPSILITATNFCPPNLAQPSDNGGWCNPPREHFDLAMPVFLKIAQYRAGIVPVSYRRVPCRKRGGIRFTINGHRYFNLVLITNVAGAGDIVRASVKGSRTGWMSLSRNWGQNWQSNAVLVGQALSFRVTGSDRRTSTSWNMVPSNWQFGQTFVGKNFRV</sequence>
<evidence type="ECO:0000250" key="1"/>
<evidence type="ECO:0000255" key="2">
    <source>
        <dbReference type="PROSITE-ProRule" id="PRU00078"/>
    </source>
</evidence>
<evidence type="ECO:0000255" key="3">
    <source>
        <dbReference type="PROSITE-ProRule" id="PRU00079"/>
    </source>
</evidence>
<evidence type="ECO:0000269" key="4">
    <source>
    </source>
</evidence>
<evidence type="ECO:0000269" key="5">
    <source ref="6"/>
</evidence>
<evidence type="ECO:0000305" key="6"/>
<keyword id="KW-0134">Cell wall</keyword>
<keyword id="KW-0961">Cell wall biogenesis/degradation</keyword>
<keyword id="KW-0903">Direct protein sequencing</keyword>
<keyword id="KW-1015">Disulfide bond</keyword>
<keyword id="KW-0472">Membrane</keyword>
<keyword id="KW-1185">Reference proteome</keyword>
<keyword id="KW-0964">Secreted</keyword>
<keyword id="KW-0732">Signal</keyword>
<proteinExistence type="evidence at protein level"/>
<name>EXPA4_ARATH</name>
<protein>
    <recommendedName>
        <fullName>Expansin-A4</fullName>
        <shortName>AtEXPA4</shortName>
    </recommendedName>
    <alternativeName>
        <fullName>Alpha-expansin-4</fullName>
        <shortName>At-EXP4</shortName>
        <shortName>AtEx4</shortName>
    </alternativeName>
    <alternativeName>
        <fullName>Ath-ExpAlpha-1.6</fullName>
    </alternativeName>
</protein>
<accession>O48818</accession>
<accession>P80837</accession>
<accession>Q8LDZ1</accession>